<dbReference type="EMBL" id="CP000653">
    <property type="protein sequence ID" value="ABP62405.1"/>
    <property type="molecule type" value="Genomic_DNA"/>
</dbReference>
<dbReference type="RefSeq" id="WP_015960715.1">
    <property type="nucleotide sequence ID" value="NC_009436.1"/>
</dbReference>
<dbReference type="SMR" id="A4WFC5"/>
<dbReference type="STRING" id="399742.Ent638_3748"/>
<dbReference type="GeneID" id="93306723"/>
<dbReference type="KEGG" id="ent:Ent638_3748"/>
<dbReference type="eggNOG" id="COG0090">
    <property type="taxonomic scope" value="Bacteria"/>
</dbReference>
<dbReference type="HOGENOM" id="CLU_036235_2_1_6"/>
<dbReference type="OrthoDB" id="9778722at2"/>
<dbReference type="Proteomes" id="UP000000230">
    <property type="component" value="Chromosome"/>
</dbReference>
<dbReference type="GO" id="GO:0005829">
    <property type="term" value="C:cytosol"/>
    <property type="evidence" value="ECO:0007669"/>
    <property type="project" value="UniProtKB-ARBA"/>
</dbReference>
<dbReference type="GO" id="GO:0015934">
    <property type="term" value="C:large ribosomal subunit"/>
    <property type="evidence" value="ECO:0007669"/>
    <property type="project" value="InterPro"/>
</dbReference>
<dbReference type="GO" id="GO:0019843">
    <property type="term" value="F:rRNA binding"/>
    <property type="evidence" value="ECO:0007669"/>
    <property type="project" value="UniProtKB-UniRule"/>
</dbReference>
<dbReference type="GO" id="GO:0003735">
    <property type="term" value="F:structural constituent of ribosome"/>
    <property type="evidence" value="ECO:0007669"/>
    <property type="project" value="InterPro"/>
</dbReference>
<dbReference type="GO" id="GO:0016740">
    <property type="term" value="F:transferase activity"/>
    <property type="evidence" value="ECO:0007669"/>
    <property type="project" value="InterPro"/>
</dbReference>
<dbReference type="GO" id="GO:0002181">
    <property type="term" value="P:cytoplasmic translation"/>
    <property type="evidence" value="ECO:0007669"/>
    <property type="project" value="TreeGrafter"/>
</dbReference>
<dbReference type="FunFam" id="2.30.30.30:FF:000001">
    <property type="entry name" value="50S ribosomal protein L2"/>
    <property type="match status" value="1"/>
</dbReference>
<dbReference type="FunFam" id="2.40.50.140:FF:000003">
    <property type="entry name" value="50S ribosomal protein L2"/>
    <property type="match status" value="1"/>
</dbReference>
<dbReference type="FunFam" id="4.10.950.10:FF:000001">
    <property type="entry name" value="50S ribosomal protein L2"/>
    <property type="match status" value="1"/>
</dbReference>
<dbReference type="Gene3D" id="2.30.30.30">
    <property type="match status" value="1"/>
</dbReference>
<dbReference type="Gene3D" id="2.40.50.140">
    <property type="entry name" value="Nucleic acid-binding proteins"/>
    <property type="match status" value="1"/>
</dbReference>
<dbReference type="Gene3D" id="4.10.950.10">
    <property type="entry name" value="Ribosomal protein L2, domain 3"/>
    <property type="match status" value="1"/>
</dbReference>
<dbReference type="HAMAP" id="MF_01320_B">
    <property type="entry name" value="Ribosomal_uL2_B"/>
    <property type="match status" value="1"/>
</dbReference>
<dbReference type="InterPro" id="IPR012340">
    <property type="entry name" value="NA-bd_OB-fold"/>
</dbReference>
<dbReference type="InterPro" id="IPR014722">
    <property type="entry name" value="Rib_uL2_dom2"/>
</dbReference>
<dbReference type="InterPro" id="IPR002171">
    <property type="entry name" value="Ribosomal_uL2"/>
</dbReference>
<dbReference type="InterPro" id="IPR005880">
    <property type="entry name" value="Ribosomal_uL2_bac/org-type"/>
</dbReference>
<dbReference type="InterPro" id="IPR022669">
    <property type="entry name" value="Ribosomal_uL2_C"/>
</dbReference>
<dbReference type="InterPro" id="IPR022671">
    <property type="entry name" value="Ribosomal_uL2_CS"/>
</dbReference>
<dbReference type="InterPro" id="IPR014726">
    <property type="entry name" value="Ribosomal_uL2_dom3"/>
</dbReference>
<dbReference type="InterPro" id="IPR022666">
    <property type="entry name" value="Ribosomal_uL2_RNA-bd_dom"/>
</dbReference>
<dbReference type="InterPro" id="IPR008991">
    <property type="entry name" value="Translation_prot_SH3-like_sf"/>
</dbReference>
<dbReference type="NCBIfam" id="TIGR01171">
    <property type="entry name" value="rplB_bact"/>
    <property type="match status" value="1"/>
</dbReference>
<dbReference type="PANTHER" id="PTHR13691:SF5">
    <property type="entry name" value="LARGE RIBOSOMAL SUBUNIT PROTEIN UL2M"/>
    <property type="match status" value="1"/>
</dbReference>
<dbReference type="PANTHER" id="PTHR13691">
    <property type="entry name" value="RIBOSOMAL PROTEIN L2"/>
    <property type="match status" value="1"/>
</dbReference>
<dbReference type="Pfam" id="PF00181">
    <property type="entry name" value="Ribosomal_L2"/>
    <property type="match status" value="1"/>
</dbReference>
<dbReference type="Pfam" id="PF03947">
    <property type="entry name" value="Ribosomal_L2_C"/>
    <property type="match status" value="1"/>
</dbReference>
<dbReference type="PIRSF" id="PIRSF002158">
    <property type="entry name" value="Ribosomal_L2"/>
    <property type="match status" value="1"/>
</dbReference>
<dbReference type="SMART" id="SM01383">
    <property type="entry name" value="Ribosomal_L2"/>
    <property type="match status" value="1"/>
</dbReference>
<dbReference type="SMART" id="SM01382">
    <property type="entry name" value="Ribosomal_L2_C"/>
    <property type="match status" value="1"/>
</dbReference>
<dbReference type="SUPFAM" id="SSF50249">
    <property type="entry name" value="Nucleic acid-binding proteins"/>
    <property type="match status" value="1"/>
</dbReference>
<dbReference type="SUPFAM" id="SSF50104">
    <property type="entry name" value="Translation proteins SH3-like domain"/>
    <property type="match status" value="1"/>
</dbReference>
<dbReference type="PROSITE" id="PS00467">
    <property type="entry name" value="RIBOSOMAL_L2"/>
    <property type="match status" value="1"/>
</dbReference>
<comment type="function">
    <text evidence="1">One of the primary rRNA binding proteins. Required for association of the 30S and 50S subunits to form the 70S ribosome, for tRNA binding and peptide bond formation. It has been suggested to have peptidyltransferase activity; this is somewhat controversial. Makes several contacts with the 16S rRNA in the 70S ribosome.</text>
</comment>
<comment type="subunit">
    <text evidence="1">Part of the 50S ribosomal subunit. Forms a bridge to the 30S subunit in the 70S ribosome.</text>
</comment>
<comment type="similarity">
    <text evidence="1">Belongs to the universal ribosomal protein uL2 family.</text>
</comment>
<evidence type="ECO:0000255" key="1">
    <source>
        <dbReference type="HAMAP-Rule" id="MF_01320"/>
    </source>
</evidence>
<evidence type="ECO:0000256" key="2">
    <source>
        <dbReference type="SAM" id="MobiDB-lite"/>
    </source>
</evidence>
<evidence type="ECO:0000305" key="3"/>
<organism>
    <name type="scientific">Enterobacter sp. (strain 638)</name>
    <dbReference type="NCBI Taxonomy" id="399742"/>
    <lineage>
        <taxon>Bacteria</taxon>
        <taxon>Pseudomonadati</taxon>
        <taxon>Pseudomonadota</taxon>
        <taxon>Gammaproteobacteria</taxon>
        <taxon>Enterobacterales</taxon>
        <taxon>Enterobacteriaceae</taxon>
        <taxon>Enterobacter</taxon>
    </lineage>
</organism>
<accession>A4WFC5</accession>
<keyword id="KW-0687">Ribonucleoprotein</keyword>
<keyword id="KW-0689">Ribosomal protein</keyword>
<keyword id="KW-0694">RNA-binding</keyword>
<keyword id="KW-0699">rRNA-binding</keyword>
<sequence>MAVVKCKPTSPGRRHVVKVVNPELHKGKPFAPLVEKNSKSGGRNNNGRITTRHIGGGHKQAYRIVDFKRNKDGIPATVERLEYDPNRSANIALVLYKDGERRYILAPKGLKAGDQIQSGVDAAIKAGNTLPMRNIPVGSTVHNVEMKPGKGGQLARSAGTYVQIVARDGAYVTLRLRSGEMRKVEADCRATLGEVGNAEHMLRVLGKAGAARWRGIRPTVRGTAMNPVDHPHGGGEGRNFGKHPVTPWGVQTKGKKTRSNKRTDKFIVRRRSK</sequence>
<name>RL2_ENT38</name>
<proteinExistence type="inferred from homology"/>
<reference key="1">
    <citation type="journal article" date="2010" name="PLoS Genet.">
        <title>Genome sequence of the plant growth promoting endophytic bacterium Enterobacter sp. 638.</title>
        <authorList>
            <person name="Taghavi S."/>
            <person name="van der Lelie D."/>
            <person name="Hoffman A."/>
            <person name="Zhang Y.B."/>
            <person name="Walla M.D."/>
            <person name="Vangronsveld J."/>
            <person name="Newman L."/>
            <person name="Monchy S."/>
        </authorList>
    </citation>
    <scope>NUCLEOTIDE SEQUENCE [LARGE SCALE GENOMIC DNA]</scope>
    <source>
        <strain>638</strain>
    </source>
</reference>
<feature type="chain" id="PRO_1000067541" description="Large ribosomal subunit protein uL2">
    <location>
        <begin position="1"/>
        <end position="273"/>
    </location>
</feature>
<feature type="region of interest" description="Disordered" evidence="2">
    <location>
        <begin position="28"/>
        <end position="53"/>
    </location>
</feature>
<feature type="region of interest" description="Disordered" evidence="2">
    <location>
        <begin position="221"/>
        <end position="273"/>
    </location>
</feature>
<feature type="compositionally biased region" description="Low complexity" evidence="2">
    <location>
        <begin position="39"/>
        <end position="48"/>
    </location>
</feature>
<gene>
    <name evidence="1" type="primary">rplB</name>
    <name type="ordered locus">Ent638_3748</name>
</gene>
<protein>
    <recommendedName>
        <fullName evidence="1">Large ribosomal subunit protein uL2</fullName>
    </recommendedName>
    <alternativeName>
        <fullName evidence="3">50S ribosomal protein L2</fullName>
    </alternativeName>
</protein>